<name>TTCA2_FRATO</name>
<proteinExistence type="inferred from homology"/>
<protein>
    <recommendedName>
        <fullName evidence="1">tRNA-cytidine(32) 2-sulfurtransferase 2</fullName>
        <ecNumber evidence="1">2.8.1.-</ecNumber>
    </recommendedName>
    <alternativeName>
        <fullName evidence="1">Two-thiocytidine biosynthesis protein A 2</fullName>
    </alternativeName>
    <alternativeName>
        <fullName evidence="1">tRNA 2-thiocytidine biosynthesis protein TtcA 2</fullName>
    </alternativeName>
</protein>
<keyword id="KW-0004">4Fe-4S</keyword>
<keyword id="KW-0067">ATP-binding</keyword>
<keyword id="KW-0963">Cytoplasm</keyword>
<keyword id="KW-0408">Iron</keyword>
<keyword id="KW-0411">Iron-sulfur</keyword>
<keyword id="KW-0460">Magnesium</keyword>
<keyword id="KW-0479">Metal-binding</keyword>
<keyword id="KW-0547">Nucleotide-binding</keyword>
<keyword id="KW-0694">RNA-binding</keyword>
<keyword id="KW-0808">Transferase</keyword>
<keyword id="KW-0819">tRNA processing</keyword>
<keyword id="KW-0820">tRNA-binding</keyword>
<feature type="chain" id="PRO_0000348734" description="tRNA-cytidine(32) 2-sulfurtransferase 2">
    <location>
        <begin position="1"/>
        <end position="267"/>
    </location>
</feature>
<feature type="short sequence motif" description="PP-loop motif" evidence="1">
    <location>
        <begin position="42"/>
        <end position="47"/>
    </location>
</feature>
<feature type="binding site" evidence="1">
    <location>
        <position position="117"/>
    </location>
    <ligand>
        <name>[4Fe-4S] cluster</name>
        <dbReference type="ChEBI" id="CHEBI:49883"/>
    </ligand>
</feature>
<feature type="binding site" evidence="1">
    <location>
        <position position="120"/>
    </location>
    <ligand>
        <name>[4Fe-4S] cluster</name>
        <dbReference type="ChEBI" id="CHEBI:49883"/>
    </ligand>
</feature>
<feature type="binding site" evidence="1">
    <location>
        <position position="208"/>
    </location>
    <ligand>
        <name>[4Fe-4S] cluster</name>
        <dbReference type="ChEBI" id="CHEBI:49883"/>
    </ligand>
</feature>
<gene>
    <name evidence="1" type="primary">ttcA2</name>
    <name type="ordered locus">FTH_1022</name>
</gene>
<accession>Q0BLX1</accession>
<organism>
    <name type="scientific">Francisella tularensis subsp. holarctica (strain OSU18)</name>
    <dbReference type="NCBI Taxonomy" id="393011"/>
    <lineage>
        <taxon>Bacteria</taxon>
        <taxon>Pseudomonadati</taxon>
        <taxon>Pseudomonadota</taxon>
        <taxon>Gammaproteobacteria</taxon>
        <taxon>Thiotrichales</taxon>
        <taxon>Francisellaceae</taxon>
        <taxon>Francisella</taxon>
    </lineage>
</organism>
<comment type="function">
    <text evidence="1">Catalyzes the ATP-dependent 2-thiolation of cytidine in position 32 of tRNA, to form 2-thiocytidine (s(2)C32). The sulfur atoms are provided by the cysteine/cysteine desulfurase (IscS) system.</text>
</comment>
<comment type="catalytic activity">
    <reaction evidence="1">
        <text>cytidine(32) in tRNA + S-sulfanyl-L-cysteinyl-[cysteine desulfurase] + AH2 + ATP = 2-thiocytidine(32) in tRNA + L-cysteinyl-[cysteine desulfurase] + A + AMP + diphosphate + H(+)</text>
        <dbReference type="Rhea" id="RHEA:57048"/>
        <dbReference type="Rhea" id="RHEA-COMP:10288"/>
        <dbReference type="Rhea" id="RHEA-COMP:12157"/>
        <dbReference type="Rhea" id="RHEA-COMP:12158"/>
        <dbReference type="Rhea" id="RHEA-COMP:14821"/>
        <dbReference type="ChEBI" id="CHEBI:13193"/>
        <dbReference type="ChEBI" id="CHEBI:15378"/>
        <dbReference type="ChEBI" id="CHEBI:17499"/>
        <dbReference type="ChEBI" id="CHEBI:29950"/>
        <dbReference type="ChEBI" id="CHEBI:30616"/>
        <dbReference type="ChEBI" id="CHEBI:33019"/>
        <dbReference type="ChEBI" id="CHEBI:61963"/>
        <dbReference type="ChEBI" id="CHEBI:82748"/>
        <dbReference type="ChEBI" id="CHEBI:141453"/>
        <dbReference type="ChEBI" id="CHEBI:456215"/>
    </reaction>
    <physiologicalReaction direction="left-to-right" evidence="1">
        <dbReference type="Rhea" id="RHEA:57049"/>
    </physiologicalReaction>
</comment>
<comment type="cofactor">
    <cofactor evidence="1">
        <name>Mg(2+)</name>
        <dbReference type="ChEBI" id="CHEBI:18420"/>
    </cofactor>
</comment>
<comment type="cofactor">
    <cofactor evidence="1">
        <name>[4Fe-4S] cluster</name>
        <dbReference type="ChEBI" id="CHEBI:49883"/>
    </cofactor>
    <text evidence="1">Binds 1 [4Fe-4S] cluster per subunit. The cluster is chelated by three Cys residues, the fourth Fe has a free coordination site that may bind a sulfur atom transferred from the persulfide of IscS.</text>
</comment>
<comment type="pathway">
    <text evidence="1">tRNA modification.</text>
</comment>
<comment type="subunit">
    <text evidence="1">Homodimer.</text>
</comment>
<comment type="subcellular location">
    <subcellularLocation>
        <location evidence="1">Cytoplasm</location>
    </subcellularLocation>
</comment>
<comment type="miscellaneous">
    <text evidence="1">The thiolation reaction likely consists of two steps: a first activation step by ATP to form an adenylated intermediate of the target base of tRNA, and a second nucleophilic substitution step of the sulfur (S) atom supplied by the hydrosulfide attached to the Fe-S cluster.</text>
</comment>
<comment type="similarity">
    <text evidence="1">Belongs to the TtcA family.</text>
</comment>
<sequence>MTNNTDKQTLKKLERQILRKTTQVINQYNMIEDGDKIMVCLSGGKDSYCLLEMLLLLQKKAPISFEIIAVNLDQKQPGFPEEVLPNYLKNKGVEFHIIERDTYSIVKRVIPEGKTTCGLCSRMRRGILYDFAEENNVTKVALGHHRDDIIETFFLNLFYNGSIKAMPTKLLSDDKRNIVIRPLAFVSEKETLEYSQLKEFPIIPCNLCGSQDNLQRVFIKDMLNRWEQNNPERKNVIFKALSNISPSQMLDKELFDFINISKDDIQR</sequence>
<evidence type="ECO:0000255" key="1">
    <source>
        <dbReference type="HAMAP-Rule" id="MF_01850"/>
    </source>
</evidence>
<reference key="1">
    <citation type="journal article" date="2006" name="J. Bacteriol.">
        <title>Chromosome rearrangement and diversification of Francisella tularensis revealed by the type B (OSU18) genome sequence.</title>
        <authorList>
            <person name="Petrosino J.F."/>
            <person name="Xiang Q."/>
            <person name="Karpathy S.E."/>
            <person name="Jiang H."/>
            <person name="Yerrapragada S."/>
            <person name="Liu Y."/>
            <person name="Gioia J."/>
            <person name="Hemphill L."/>
            <person name="Gonzalez A."/>
            <person name="Raghavan T.M."/>
            <person name="Uzman A."/>
            <person name="Fox G.E."/>
            <person name="Highlander S."/>
            <person name="Reichard M."/>
            <person name="Morton R.J."/>
            <person name="Clinkenbeard K.D."/>
            <person name="Weinstock G.M."/>
        </authorList>
    </citation>
    <scope>NUCLEOTIDE SEQUENCE [LARGE SCALE GENOMIC DNA]</scope>
    <source>
        <strain>OSU18</strain>
    </source>
</reference>
<dbReference type="EC" id="2.8.1.-" evidence="1"/>
<dbReference type="EMBL" id="CP000437">
    <property type="protein sequence ID" value="ABI82913.1"/>
    <property type="molecule type" value="Genomic_DNA"/>
</dbReference>
<dbReference type="SMR" id="Q0BLX1"/>
<dbReference type="KEGG" id="fth:FTH_1022"/>
<dbReference type="GO" id="GO:0005737">
    <property type="term" value="C:cytoplasm"/>
    <property type="evidence" value="ECO:0007669"/>
    <property type="project" value="UniProtKB-SubCell"/>
</dbReference>
<dbReference type="GO" id="GO:0051539">
    <property type="term" value="F:4 iron, 4 sulfur cluster binding"/>
    <property type="evidence" value="ECO:0007669"/>
    <property type="project" value="UniProtKB-UniRule"/>
</dbReference>
<dbReference type="GO" id="GO:0005524">
    <property type="term" value="F:ATP binding"/>
    <property type="evidence" value="ECO:0007669"/>
    <property type="project" value="UniProtKB-UniRule"/>
</dbReference>
<dbReference type="GO" id="GO:0000287">
    <property type="term" value="F:magnesium ion binding"/>
    <property type="evidence" value="ECO:0007669"/>
    <property type="project" value="UniProtKB-UniRule"/>
</dbReference>
<dbReference type="GO" id="GO:0016783">
    <property type="term" value="F:sulfurtransferase activity"/>
    <property type="evidence" value="ECO:0007669"/>
    <property type="project" value="UniProtKB-UniRule"/>
</dbReference>
<dbReference type="GO" id="GO:0000049">
    <property type="term" value="F:tRNA binding"/>
    <property type="evidence" value="ECO:0007669"/>
    <property type="project" value="UniProtKB-KW"/>
</dbReference>
<dbReference type="GO" id="GO:0034227">
    <property type="term" value="P:tRNA thio-modification"/>
    <property type="evidence" value="ECO:0007669"/>
    <property type="project" value="UniProtKB-UniRule"/>
</dbReference>
<dbReference type="CDD" id="cd24138">
    <property type="entry name" value="TtcA-like"/>
    <property type="match status" value="1"/>
</dbReference>
<dbReference type="Gene3D" id="3.40.50.620">
    <property type="entry name" value="HUPs"/>
    <property type="match status" value="1"/>
</dbReference>
<dbReference type="HAMAP" id="MF_01850">
    <property type="entry name" value="TtcA"/>
    <property type="match status" value="1"/>
</dbReference>
<dbReference type="InterPro" id="IPR014729">
    <property type="entry name" value="Rossmann-like_a/b/a_fold"/>
</dbReference>
<dbReference type="InterPro" id="IPR011063">
    <property type="entry name" value="TilS/TtcA_N"/>
</dbReference>
<dbReference type="InterPro" id="IPR012089">
    <property type="entry name" value="tRNA_Cyd_32_2_STrfase"/>
</dbReference>
<dbReference type="InterPro" id="IPR035107">
    <property type="entry name" value="tRNA_thiolation_TtcA_Ctu1"/>
</dbReference>
<dbReference type="NCBIfam" id="NF007972">
    <property type="entry name" value="PRK10696.1"/>
    <property type="match status" value="1"/>
</dbReference>
<dbReference type="PANTHER" id="PTHR43686:SF1">
    <property type="entry name" value="AMINOTRAN_5 DOMAIN-CONTAINING PROTEIN"/>
    <property type="match status" value="1"/>
</dbReference>
<dbReference type="PANTHER" id="PTHR43686">
    <property type="entry name" value="SULFURTRANSFERASE-RELATED"/>
    <property type="match status" value="1"/>
</dbReference>
<dbReference type="Pfam" id="PF01171">
    <property type="entry name" value="ATP_bind_3"/>
    <property type="match status" value="1"/>
</dbReference>
<dbReference type="PIRSF" id="PIRSF004976">
    <property type="entry name" value="ATPase_YdaO"/>
    <property type="match status" value="1"/>
</dbReference>
<dbReference type="SUPFAM" id="SSF52402">
    <property type="entry name" value="Adenine nucleotide alpha hydrolases-like"/>
    <property type="match status" value="1"/>
</dbReference>